<reference key="1">
    <citation type="journal article" date="2002" name="Proc. Natl. Acad. Sci. U.S.A.">
        <title>Extensive mosaic structure revealed by the complete genome sequence of uropathogenic Escherichia coli.</title>
        <authorList>
            <person name="Welch R.A."/>
            <person name="Burland V."/>
            <person name="Plunkett G. III"/>
            <person name="Redford P."/>
            <person name="Roesch P."/>
            <person name="Rasko D."/>
            <person name="Buckles E.L."/>
            <person name="Liou S.-R."/>
            <person name="Boutin A."/>
            <person name="Hackett J."/>
            <person name="Stroud D."/>
            <person name="Mayhew G.F."/>
            <person name="Rose D.J."/>
            <person name="Zhou S."/>
            <person name="Schwartz D.C."/>
            <person name="Perna N.T."/>
            <person name="Mobley H.L.T."/>
            <person name="Donnenberg M.S."/>
            <person name="Blattner F.R."/>
        </authorList>
    </citation>
    <scope>NUCLEOTIDE SEQUENCE [LARGE SCALE GENOMIC DNA]</scope>
    <source>
        <strain>CFT073 / ATCC 700928 / UPEC</strain>
    </source>
</reference>
<comment type="function">
    <text evidence="1">One of at least two accessory proteins for anaerobic nitric oxide (NO) reductase. Reduces the rubredoxin moiety of NO reductase.</text>
</comment>
<comment type="catalytic activity">
    <reaction evidence="1">
        <text>2 reduced [nitric oxide reductase rubredoxin domain] + NAD(+) + H(+) = 2 oxidized [nitric oxide reductase rubredoxin domain] + NADH</text>
        <dbReference type="Rhea" id="RHEA:42960"/>
        <dbReference type="Rhea" id="RHEA-COMP:10304"/>
        <dbReference type="Rhea" id="RHEA-COMP:10305"/>
        <dbReference type="ChEBI" id="CHEBI:15378"/>
        <dbReference type="ChEBI" id="CHEBI:29033"/>
        <dbReference type="ChEBI" id="CHEBI:29034"/>
        <dbReference type="ChEBI" id="CHEBI:57540"/>
        <dbReference type="ChEBI" id="CHEBI:57945"/>
    </reaction>
</comment>
<comment type="cofactor">
    <cofactor evidence="1">
        <name>FAD</name>
        <dbReference type="ChEBI" id="CHEBI:57692"/>
    </cofactor>
</comment>
<comment type="pathway">
    <text evidence="1">Nitrogen metabolism; nitric oxide reduction.</text>
</comment>
<comment type="subcellular location">
    <subcellularLocation>
        <location evidence="1">Cytoplasm</location>
    </subcellularLocation>
</comment>
<comment type="similarity">
    <text evidence="1">Belongs to the FAD-dependent oxidoreductase family.</text>
</comment>
<feature type="chain" id="PRO_0000167663" description="Nitric oxide reductase FlRd-NAD(+) reductase">
    <location>
        <begin position="1"/>
        <end position="377"/>
    </location>
</feature>
<protein>
    <recommendedName>
        <fullName evidence="1">Nitric oxide reductase FlRd-NAD(+) reductase</fullName>
        <ecNumber evidence="1">1.18.1.-</ecNumber>
    </recommendedName>
    <alternativeName>
        <fullName evidence="1">Flavorubredoxin reductase</fullName>
        <shortName evidence="1">FlRd-reductase</shortName>
        <shortName evidence="1">FlavoRb reductase</shortName>
    </alternativeName>
</protein>
<dbReference type="EC" id="1.18.1.-" evidence="1"/>
<dbReference type="EMBL" id="AE014075">
    <property type="protein sequence ID" value="AAN81716.1"/>
    <property type="molecule type" value="Genomic_DNA"/>
</dbReference>
<dbReference type="RefSeq" id="WP_000064718.1">
    <property type="nucleotide sequence ID" value="NZ_CP051263.1"/>
</dbReference>
<dbReference type="SMR" id="Q8FEN4"/>
<dbReference type="STRING" id="199310.c3267"/>
<dbReference type="KEGG" id="ecc:c3267"/>
<dbReference type="eggNOG" id="COG0446">
    <property type="taxonomic scope" value="Bacteria"/>
</dbReference>
<dbReference type="HOGENOM" id="CLU_003291_4_4_6"/>
<dbReference type="BioCyc" id="ECOL199310:C3267-MONOMER"/>
<dbReference type="UniPathway" id="UPA00638"/>
<dbReference type="Proteomes" id="UP000001410">
    <property type="component" value="Chromosome"/>
</dbReference>
<dbReference type="GO" id="GO:0005737">
    <property type="term" value="C:cytoplasm"/>
    <property type="evidence" value="ECO:0007669"/>
    <property type="project" value="UniProtKB-SubCell"/>
</dbReference>
<dbReference type="GO" id="GO:0016731">
    <property type="term" value="F:oxidoreductase activity, acting on iron-sulfur proteins as donors, NAD or NADP as acceptor"/>
    <property type="evidence" value="ECO:0007669"/>
    <property type="project" value="UniProtKB-UniRule"/>
</dbReference>
<dbReference type="FunFam" id="3.30.390.120:FF:000001">
    <property type="entry name" value="Nitric oxide reductase FlRd-NAD(+) reductase"/>
    <property type="match status" value="1"/>
</dbReference>
<dbReference type="FunFam" id="3.50.50.60:FF:000075">
    <property type="entry name" value="Nitric oxide reductase FlRd-NAD(+) reductase"/>
    <property type="match status" value="1"/>
</dbReference>
<dbReference type="Gene3D" id="3.30.390.120">
    <property type="match status" value="1"/>
</dbReference>
<dbReference type="Gene3D" id="3.50.50.60">
    <property type="entry name" value="FAD/NAD(P)-binding domain"/>
    <property type="match status" value="2"/>
</dbReference>
<dbReference type="HAMAP" id="MF_01313">
    <property type="entry name" value="NorW"/>
    <property type="match status" value="1"/>
</dbReference>
<dbReference type="InterPro" id="IPR050260">
    <property type="entry name" value="FAD-bd_OxRdtase"/>
</dbReference>
<dbReference type="InterPro" id="IPR036188">
    <property type="entry name" value="FAD/NAD-bd_sf"/>
</dbReference>
<dbReference type="InterPro" id="IPR023753">
    <property type="entry name" value="FAD/NAD-binding_dom"/>
</dbReference>
<dbReference type="InterPro" id="IPR023961">
    <property type="entry name" value="NO_rdtase_NorW"/>
</dbReference>
<dbReference type="InterPro" id="IPR041364">
    <property type="entry name" value="Rbx-bd"/>
</dbReference>
<dbReference type="NCBIfam" id="NF003437">
    <property type="entry name" value="PRK04965.1"/>
    <property type="match status" value="1"/>
</dbReference>
<dbReference type="PANTHER" id="PTHR43429:SF3">
    <property type="entry name" value="NITRITE REDUCTASE [NAD(P)H]"/>
    <property type="match status" value="1"/>
</dbReference>
<dbReference type="PANTHER" id="PTHR43429">
    <property type="entry name" value="PYRIDINE NUCLEOTIDE-DISULFIDE OXIDOREDUCTASE DOMAIN-CONTAINING"/>
    <property type="match status" value="1"/>
</dbReference>
<dbReference type="Pfam" id="PF07992">
    <property type="entry name" value="Pyr_redox_2"/>
    <property type="match status" value="1"/>
</dbReference>
<dbReference type="Pfam" id="PF18113">
    <property type="entry name" value="Rbx_binding"/>
    <property type="match status" value="1"/>
</dbReference>
<dbReference type="PRINTS" id="PR00368">
    <property type="entry name" value="FADPNR"/>
</dbReference>
<dbReference type="PRINTS" id="PR00411">
    <property type="entry name" value="PNDRDTASEI"/>
</dbReference>
<dbReference type="SUPFAM" id="SSF51905">
    <property type="entry name" value="FAD/NAD(P)-binding domain"/>
    <property type="match status" value="1"/>
</dbReference>
<name>NORW_ECOL6</name>
<evidence type="ECO:0000255" key="1">
    <source>
        <dbReference type="HAMAP-Rule" id="MF_01313"/>
    </source>
</evidence>
<accession>Q8FEN4</accession>
<proteinExistence type="inferred from homology"/>
<keyword id="KW-0963">Cytoplasm</keyword>
<keyword id="KW-0274">FAD</keyword>
<keyword id="KW-0285">Flavoprotein</keyword>
<keyword id="KW-0520">NAD</keyword>
<keyword id="KW-0560">Oxidoreductase</keyword>
<keyword id="KW-1185">Reference proteome</keyword>
<organism>
    <name type="scientific">Escherichia coli O6:H1 (strain CFT073 / ATCC 700928 / UPEC)</name>
    <dbReference type="NCBI Taxonomy" id="199310"/>
    <lineage>
        <taxon>Bacteria</taxon>
        <taxon>Pseudomonadati</taxon>
        <taxon>Pseudomonadota</taxon>
        <taxon>Gammaproteobacteria</taxon>
        <taxon>Enterobacterales</taxon>
        <taxon>Enterobacteriaceae</taxon>
        <taxon>Escherichia</taxon>
    </lineage>
</organism>
<gene>
    <name evidence="1" type="primary">norW</name>
    <name evidence="1" type="synonym">flrR</name>
    <name type="ordered locus">c3267</name>
</gene>
<sequence>MSNGIVIIGSGFAARQLVKNIRKQDASIPLTLIAADSMDEYNKPDLSHVISQGQRADDLTRQTAGEFAEQFNLRLFPHTWVTDIDAEAHVVKSQNNQWQYDKLVLATGASAFVPPVPGRELMLTLNSQQEYRACETQLRDARRVLIVGGGLIGSELAMDFCRAGKAVTLIDNAASILASLMPTEVSSRLQHRLTEMGVHLLLKSQLQGLEKTDSGILATLDRQRCIEVDAVIAATGLRPETALARRAGLTINRGVCVDSYLQTSNADIYALGDCAEINGQVLPFLQPIQLSAMVLAKNLLGNNTPLKLPAMLVKIKTPELPLHLAGETQRQDLRWQINTERQGMVARGVDDADQLRAFVVSEDRMKEAFGLLKTLSM</sequence>